<protein>
    <recommendedName>
        <fullName evidence="1">Indole-3-glycerol phosphate synthase</fullName>
        <shortName evidence="1">IGPS</shortName>
        <ecNumber evidence="1">4.1.1.48</ecNumber>
    </recommendedName>
</protein>
<dbReference type="EC" id="4.1.1.48" evidence="1"/>
<dbReference type="EMBL" id="CP000133">
    <property type="protein sequence ID" value="ABC90957.1"/>
    <property type="molecule type" value="Genomic_DNA"/>
</dbReference>
<dbReference type="RefSeq" id="WP_011425438.1">
    <property type="nucleotide sequence ID" value="NC_007761.1"/>
</dbReference>
<dbReference type="SMR" id="Q2K879"/>
<dbReference type="KEGG" id="ret:RHE_CH02175"/>
<dbReference type="eggNOG" id="COG0134">
    <property type="taxonomic scope" value="Bacteria"/>
</dbReference>
<dbReference type="HOGENOM" id="CLU_034247_2_0_5"/>
<dbReference type="OrthoDB" id="9804217at2"/>
<dbReference type="UniPathway" id="UPA00035">
    <property type="reaction ID" value="UER00043"/>
</dbReference>
<dbReference type="Proteomes" id="UP000001936">
    <property type="component" value="Chromosome"/>
</dbReference>
<dbReference type="GO" id="GO:0004425">
    <property type="term" value="F:indole-3-glycerol-phosphate synthase activity"/>
    <property type="evidence" value="ECO:0007669"/>
    <property type="project" value="UniProtKB-UniRule"/>
</dbReference>
<dbReference type="GO" id="GO:0004640">
    <property type="term" value="F:phosphoribosylanthranilate isomerase activity"/>
    <property type="evidence" value="ECO:0007669"/>
    <property type="project" value="TreeGrafter"/>
</dbReference>
<dbReference type="GO" id="GO:0000162">
    <property type="term" value="P:L-tryptophan biosynthetic process"/>
    <property type="evidence" value="ECO:0007669"/>
    <property type="project" value="UniProtKB-UniRule"/>
</dbReference>
<dbReference type="CDD" id="cd00331">
    <property type="entry name" value="IGPS"/>
    <property type="match status" value="1"/>
</dbReference>
<dbReference type="FunFam" id="3.20.20.70:FF:000024">
    <property type="entry name" value="Indole-3-glycerol phosphate synthase"/>
    <property type="match status" value="1"/>
</dbReference>
<dbReference type="Gene3D" id="3.20.20.70">
    <property type="entry name" value="Aldolase class I"/>
    <property type="match status" value="1"/>
</dbReference>
<dbReference type="HAMAP" id="MF_00134_B">
    <property type="entry name" value="IGPS_B"/>
    <property type="match status" value="1"/>
</dbReference>
<dbReference type="InterPro" id="IPR013785">
    <property type="entry name" value="Aldolase_TIM"/>
</dbReference>
<dbReference type="InterPro" id="IPR045186">
    <property type="entry name" value="Indole-3-glycerol_P_synth"/>
</dbReference>
<dbReference type="InterPro" id="IPR013798">
    <property type="entry name" value="Indole-3-glycerol_P_synth_dom"/>
</dbReference>
<dbReference type="InterPro" id="IPR001468">
    <property type="entry name" value="Indole-3-GlycerolPSynthase_CS"/>
</dbReference>
<dbReference type="InterPro" id="IPR011060">
    <property type="entry name" value="RibuloseP-bd_barrel"/>
</dbReference>
<dbReference type="NCBIfam" id="NF001370">
    <property type="entry name" value="PRK00278.1-2"/>
    <property type="match status" value="1"/>
</dbReference>
<dbReference type="NCBIfam" id="NF001373">
    <property type="entry name" value="PRK00278.1-6"/>
    <property type="match status" value="1"/>
</dbReference>
<dbReference type="NCBIfam" id="NF001377">
    <property type="entry name" value="PRK00278.2-4"/>
    <property type="match status" value="1"/>
</dbReference>
<dbReference type="PANTHER" id="PTHR22854:SF2">
    <property type="entry name" value="INDOLE-3-GLYCEROL-PHOSPHATE SYNTHASE"/>
    <property type="match status" value="1"/>
</dbReference>
<dbReference type="PANTHER" id="PTHR22854">
    <property type="entry name" value="TRYPTOPHAN BIOSYNTHESIS PROTEIN"/>
    <property type="match status" value="1"/>
</dbReference>
<dbReference type="Pfam" id="PF00218">
    <property type="entry name" value="IGPS"/>
    <property type="match status" value="1"/>
</dbReference>
<dbReference type="SUPFAM" id="SSF51366">
    <property type="entry name" value="Ribulose-phoshate binding barrel"/>
    <property type="match status" value="1"/>
</dbReference>
<dbReference type="PROSITE" id="PS00614">
    <property type="entry name" value="IGPS"/>
    <property type="match status" value="1"/>
</dbReference>
<proteinExistence type="inferred from homology"/>
<evidence type="ECO:0000255" key="1">
    <source>
        <dbReference type="HAMAP-Rule" id="MF_00134"/>
    </source>
</evidence>
<gene>
    <name evidence="1" type="primary">trpC</name>
    <name type="ordered locus">RHE_CH02175</name>
</gene>
<comment type="catalytic activity">
    <reaction evidence="1">
        <text>1-(2-carboxyphenylamino)-1-deoxy-D-ribulose 5-phosphate + H(+) = (1S,2R)-1-C-(indol-3-yl)glycerol 3-phosphate + CO2 + H2O</text>
        <dbReference type="Rhea" id="RHEA:23476"/>
        <dbReference type="ChEBI" id="CHEBI:15377"/>
        <dbReference type="ChEBI" id="CHEBI:15378"/>
        <dbReference type="ChEBI" id="CHEBI:16526"/>
        <dbReference type="ChEBI" id="CHEBI:58613"/>
        <dbReference type="ChEBI" id="CHEBI:58866"/>
        <dbReference type="EC" id="4.1.1.48"/>
    </reaction>
</comment>
<comment type="pathway">
    <text evidence="1">Amino-acid biosynthesis; L-tryptophan biosynthesis; L-tryptophan from chorismate: step 4/5.</text>
</comment>
<comment type="similarity">
    <text evidence="1">Belongs to the TrpC family.</text>
</comment>
<organism>
    <name type="scientific">Rhizobium etli (strain ATCC 51251 / DSM 11541 / JCM 21823 / NBRC 15573 / CFN 42)</name>
    <dbReference type="NCBI Taxonomy" id="347834"/>
    <lineage>
        <taxon>Bacteria</taxon>
        <taxon>Pseudomonadati</taxon>
        <taxon>Pseudomonadota</taxon>
        <taxon>Alphaproteobacteria</taxon>
        <taxon>Hyphomicrobiales</taxon>
        <taxon>Rhizobiaceae</taxon>
        <taxon>Rhizobium/Agrobacterium group</taxon>
        <taxon>Rhizobium</taxon>
    </lineage>
</organism>
<sequence>MSDILKKIELYKREEIAAAKAAVSLADLKAMQAGQSAPRGFYQALTAKREAGHFGLIAEIKKASPSKGLIRPDFDPPALAKAYEAGGAACLSVLTDTPSFQGAPEFLTAARAACALPALRKDFMFETYQVHEARAWGADCILLIMASLTDDEAERLQDESFSLGMDVLVEVHDASEMERALKLSSPLIGINNRNLRTFEVGLTVSETLASMVPDDRLLVGESGIFTHADCKRLQAAGINTFLVGESLMRKDDVTAATRALLVGEAAIAAE</sequence>
<name>TRPC_RHIEC</name>
<keyword id="KW-0028">Amino-acid biosynthesis</keyword>
<keyword id="KW-0057">Aromatic amino acid biosynthesis</keyword>
<keyword id="KW-0210">Decarboxylase</keyword>
<keyword id="KW-0456">Lyase</keyword>
<keyword id="KW-1185">Reference proteome</keyword>
<keyword id="KW-0822">Tryptophan biosynthesis</keyword>
<reference key="1">
    <citation type="journal article" date="2006" name="Proc. Natl. Acad. Sci. U.S.A.">
        <title>The partitioned Rhizobium etli genome: genetic and metabolic redundancy in seven interacting replicons.</title>
        <authorList>
            <person name="Gonzalez V."/>
            <person name="Santamaria R.I."/>
            <person name="Bustos P."/>
            <person name="Hernandez-Gonzalez I."/>
            <person name="Medrano-Soto A."/>
            <person name="Moreno-Hagelsieb G."/>
            <person name="Janga S.C."/>
            <person name="Ramirez M.A."/>
            <person name="Jimenez-Jacinto V."/>
            <person name="Collado-Vides J."/>
            <person name="Davila G."/>
        </authorList>
    </citation>
    <scope>NUCLEOTIDE SEQUENCE [LARGE SCALE GENOMIC DNA]</scope>
    <source>
        <strain>ATCC 51251 / DSM 11541 / JCM 21823 / NBRC 15573 / CFN 42</strain>
    </source>
</reference>
<accession>Q2K879</accession>
<feature type="chain" id="PRO_1000018540" description="Indole-3-glycerol phosphate synthase">
    <location>
        <begin position="1"/>
        <end position="270"/>
    </location>
</feature>